<reference key="1">
    <citation type="journal article" date="1988" name="Proc. Natl. Acad. Sci. U.S.A.">
        <title>Identification of two integral membrane proteins of Plasmodium falciparum.</title>
        <authorList>
            <person name="Smythe J.A."/>
            <person name="Coppel R.L."/>
            <person name="Brown G.V."/>
            <person name="Ramasamy R."/>
            <person name="Kemp D.J."/>
            <person name="Anders R.F."/>
        </authorList>
    </citation>
    <scope>NUCLEOTIDE SEQUENCE [MRNA]</scope>
    <scope>SUBCELLULAR LOCATION</scope>
    <scope>DEVELOPMENTAL STAGE</scope>
    <scope>POLYMORPHISM</scope>
    <scope>REPEATS</scope>
</reference>
<reference key="2">
    <citation type="journal article" date="1998" name="Trans. R. Soc. Trop. Med. Hyg.">
        <title>Plasmodium falciparum: genetic polymorphism of the merozoite surface antigen 2 gene of strains from India.</title>
        <authorList>
            <person name="Bhattacharya P.R."/>
        </authorList>
    </citation>
    <scope>NUCLEOTIDE SEQUENCE [GENOMIC DNA]</scope>
    <source>
        <strain>SH3</strain>
        <strain>SH4</strain>
        <strain>SH5</strain>
        <strain>SH6</strain>
        <strain>SH7</strain>
        <strain>SH8</strain>
    </source>
</reference>
<reference key="3">
    <citation type="journal article" date="2008" name="J. Mol. Biol.">
        <title>Solution conformation, backbone dynamics and lipid interactions of the intrinsically unstructured malaria surface protein MSP2.</title>
        <authorList>
            <person name="Zhang X."/>
            <person name="Perugini M.A."/>
            <person name="Yao S."/>
            <person name="Adda C.G."/>
            <person name="Murphy V.J."/>
            <person name="Low A."/>
            <person name="Anders R.F."/>
            <person name="Norton R.S."/>
        </authorList>
    </citation>
    <scope>DOMAIN</scope>
    <scope>DISULFIDE BOND</scope>
</reference>
<reference key="4">
    <citation type="journal article" date="2014" name="Infect. Immun.">
        <title>Sequential processing of merozoite surface proteins during and after erythrocyte invasion by Plasmodium falciparum.</title>
        <authorList>
            <person name="Boyle M.J."/>
            <person name="Langer C."/>
            <person name="Chan J.A."/>
            <person name="Hodder A.N."/>
            <person name="Coppel R.L."/>
            <person name="Anders R.F."/>
            <person name="Beeson J.G."/>
        </authorList>
    </citation>
    <scope>FUNCTION</scope>
    <scope>SUBCELLULAR LOCATION</scope>
    <scope>DEVELOPMENTAL STAGE</scope>
</reference>
<reference evidence="10" key="5">
    <citation type="journal article" date="2015" name="Sci. Rep.">
        <title>Structural basis for epitope masking and strain specificity of a conserved epitope in an intrinsically disordered malaria vaccine candidate.</title>
        <authorList>
            <person name="Morales R.A.V."/>
            <person name="MacRaild C.A."/>
            <person name="Seow J."/>
            <person name="Krishnarjuna B."/>
            <person name="Drinkwater N."/>
            <person name="Rouet R."/>
            <person name="Anders R.F."/>
            <person name="Christ D."/>
            <person name="McGowan S."/>
            <person name="Norton R.S."/>
        </authorList>
    </citation>
    <scope>X-RAY CRYSTALLOGRAPHY (1.58 ANGSTROMS) OF 33-49 IN COMPLEX WITH ANTIBODIES</scope>
</reference>
<accession>P19599</accession>
<accession>Q6LAK6</accession>
<keyword id="KW-0002">3D-structure</keyword>
<keyword id="KW-1003">Cell membrane</keyword>
<keyword id="KW-1015">Disulfide bond</keyword>
<keyword id="KW-0325">Glycoprotein</keyword>
<keyword id="KW-0336">GPI-anchor</keyword>
<keyword id="KW-0449">Lipoprotein</keyword>
<keyword id="KW-0461">Malaria</keyword>
<keyword id="KW-0472">Membrane</keyword>
<keyword id="KW-0477">Merozoite</keyword>
<keyword id="KW-0677">Repeat</keyword>
<keyword id="KW-0732">Signal</keyword>
<name>MSA2_PLAFF</name>
<protein>
    <recommendedName>
        <fullName evidence="7">Merozoite surface protein 2</fullName>
    </recommendedName>
    <alternativeName>
        <fullName evidence="8">AG513</fullName>
    </alternativeName>
    <alternativeName>
        <fullName evidence="8">Merozoite 45 kDa surface antigen</fullName>
    </alternativeName>
    <alternativeName>
        <fullName evidence="9">Merozoite surface antigen 2</fullName>
        <shortName evidence="9">MSA-2</shortName>
    </alternativeName>
</protein>
<gene>
    <name evidence="7" type="primary">MSP2</name>
    <name evidence="9" type="synonym">MSA2</name>
</gene>
<proteinExistence type="evidence at protein level"/>
<sequence length="264" mass="27890">MKVIKTLSIINFFIFVTFNIKNESKYSNTFINNAYNMSIRRSMANEGSNTNSVGANAPNADTIASGSQRSTNSASTSTTNNGESQTTTPTAADTIASGSQRSTNSASTSTTNNGESQTTTPTAADTPTATESISPSPPITTTESSKFWQCTNKTDGKGEESEKQNELNESTEEGPKAPQEPQTAENENPAAPENKGTGQHGHMHGSRNNHPQNTSDSQKECTDGNKENCGAATSLLSNSSNIASINKFVVLISATLVLSFAIFI</sequence>
<dbReference type="EMBL" id="J03828">
    <property type="protein sequence ID" value="AAA29627.1"/>
    <property type="status" value="ALT_SEQ"/>
    <property type="molecule type" value="mRNA"/>
</dbReference>
<dbReference type="EMBL" id="Y12644">
    <property type="protein sequence ID" value="CAA73191.1"/>
    <property type="molecule type" value="Genomic_DNA"/>
</dbReference>
<dbReference type="EMBL" id="Y12645">
    <property type="protein sequence ID" value="CAA73192.1"/>
    <property type="molecule type" value="Genomic_DNA"/>
</dbReference>
<dbReference type="EMBL" id="Y12646">
    <property type="protein sequence ID" value="CAA73193.1"/>
    <property type="molecule type" value="Genomic_DNA"/>
</dbReference>
<dbReference type="EMBL" id="Y12647">
    <property type="protein sequence ID" value="CAA73194.1"/>
    <property type="molecule type" value="Genomic_DNA"/>
</dbReference>
<dbReference type="EMBL" id="Y12648">
    <property type="protein sequence ID" value="CAA73195.1"/>
    <property type="molecule type" value="Genomic_DNA"/>
</dbReference>
<dbReference type="EMBL" id="Y12649">
    <property type="protein sequence ID" value="CAA73196.1"/>
    <property type="molecule type" value="Genomic_DNA"/>
</dbReference>
<dbReference type="PIR" id="A31818">
    <property type="entry name" value="A31818"/>
</dbReference>
<dbReference type="PDB" id="4QXT">
    <property type="method" value="X-ray"/>
    <property type="resolution" value="1.58 A"/>
    <property type="chains" value="Q=33-49"/>
</dbReference>
<dbReference type="PDBsum" id="4QXT"/>
<dbReference type="BMRB" id="P19599"/>
<dbReference type="SMR" id="P19599"/>
<dbReference type="GlyCosmos" id="P19599">
    <property type="glycosylation" value="4 sites, No reported glycans"/>
</dbReference>
<dbReference type="EvolutionaryTrace" id="P19599"/>
<dbReference type="GO" id="GO:0005886">
    <property type="term" value="C:plasma membrane"/>
    <property type="evidence" value="ECO:0007669"/>
    <property type="project" value="UniProtKB-SubCell"/>
</dbReference>
<dbReference type="GO" id="GO:0098552">
    <property type="term" value="C:side of membrane"/>
    <property type="evidence" value="ECO:0007669"/>
    <property type="project" value="UniProtKB-KW"/>
</dbReference>
<dbReference type="GO" id="GO:0007155">
    <property type="term" value="P:cell adhesion"/>
    <property type="evidence" value="ECO:0007669"/>
    <property type="project" value="InterPro"/>
</dbReference>
<dbReference type="DisProt" id="DP01067"/>
<dbReference type="InterPro" id="IPR001136">
    <property type="entry name" value="MSA2"/>
</dbReference>
<dbReference type="Pfam" id="PF00985">
    <property type="entry name" value="MSA_2"/>
    <property type="match status" value="1"/>
</dbReference>
<dbReference type="PIRSF" id="PIRSF003575">
    <property type="entry name" value="MSA_2"/>
    <property type="match status" value="1"/>
</dbReference>
<comment type="function">
    <text evidence="5">May play a role in the merozoite attachment to the erythrocyte.</text>
</comment>
<comment type="subcellular location">
    <subcellularLocation>
        <location evidence="5 6">Cell membrane</location>
        <topology evidence="1">Lipid-anchor</topology>
        <topology evidence="1">GPI-anchor</topology>
    </subcellularLocation>
    <text evidence="5">During host erythrocyte invasion by merozoites, carried into invaded erythrocytes where it is rapidly degraded.</text>
</comment>
<comment type="developmental stage">
    <text evidence="5 6">Expressed during the asexual blood stage, including in the trophozoite and schizont stages, and in free merozoites (at protein level).</text>
</comment>
<comment type="domain">
    <text evidence="4">The N-terminal region appears to be involved in lipid binding.</text>
</comment>
<comment type="polymorphism">
    <text evidence="6">The sequence varies across Plasmodium strains (PubMed:3293051). All variants share conserved N- and C-terminal regions; however, they belong to two allelic families, represented by 3D7 strain and FC27 strain sequences respectively, distinguished by tandem repeats and dimorphic flanking sequences within the central region of the protein (PubMed:3293051).</text>
</comment>
<organism>
    <name type="scientific">Plasmodium falciparum (isolate FC27 / Papua New Guinea)</name>
    <dbReference type="NCBI Taxonomy" id="5837"/>
    <lineage>
        <taxon>Eukaryota</taxon>
        <taxon>Sar</taxon>
        <taxon>Alveolata</taxon>
        <taxon>Apicomplexa</taxon>
        <taxon>Aconoidasida</taxon>
        <taxon>Haemosporida</taxon>
        <taxon>Plasmodiidae</taxon>
        <taxon>Plasmodium</taxon>
        <taxon>Plasmodium (Laverania)</taxon>
    </lineage>
</organism>
<feature type="signal peptide" evidence="2">
    <location>
        <begin position="1"/>
        <end position="20"/>
    </location>
</feature>
<feature type="chain" id="PRO_0000024592" description="Merozoite surface protein 2">
    <location>
        <begin position="21"/>
        <end position="238"/>
    </location>
</feature>
<feature type="propeptide" id="PRO_0000024593" description="Removed in mature form" evidence="1">
    <location>
        <begin position="239"/>
        <end position="264"/>
    </location>
</feature>
<feature type="repeat" description="1" evidence="6">
    <location>
        <begin position="60"/>
        <end position="91"/>
    </location>
</feature>
<feature type="repeat" description="2" evidence="6">
    <location>
        <begin position="92"/>
        <end position="123"/>
    </location>
</feature>
<feature type="region of interest" description="Polymorphic region" evidence="6">
    <location>
        <begin position="44"/>
        <end position="190"/>
    </location>
</feature>
<feature type="region of interest" description="Disordered" evidence="3">
    <location>
        <begin position="46"/>
        <end position="227"/>
    </location>
</feature>
<feature type="region of interest" description="2 X 32 AA perfects repeats" evidence="6">
    <location>
        <begin position="60"/>
        <end position="123"/>
    </location>
</feature>
<feature type="compositionally biased region" description="Low complexity" evidence="3">
    <location>
        <begin position="70"/>
        <end position="81"/>
    </location>
</feature>
<feature type="compositionally biased region" description="Polar residues" evidence="3">
    <location>
        <begin position="82"/>
        <end position="101"/>
    </location>
</feature>
<feature type="compositionally biased region" description="Low complexity" evidence="3">
    <location>
        <begin position="102"/>
        <end position="145"/>
    </location>
</feature>
<feature type="compositionally biased region" description="Basic and acidic residues" evidence="3">
    <location>
        <begin position="154"/>
        <end position="166"/>
    </location>
</feature>
<feature type="compositionally biased region" description="Basic and acidic residues" evidence="3">
    <location>
        <begin position="217"/>
        <end position="226"/>
    </location>
</feature>
<feature type="lipid moiety-binding region" description="GPI-anchor amidated asparagine" evidence="1">
    <location>
        <position position="238"/>
    </location>
</feature>
<feature type="glycosylation site" description="N-linked (GlcNAc...) asparagine" evidence="2">
    <location>
        <position position="22"/>
    </location>
</feature>
<feature type="glycosylation site" description="N-linked (GlcNAc...) asparagine" evidence="2">
    <location>
        <position position="36"/>
    </location>
</feature>
<feature type="glycosylation site" description="N-linked (GlcNAc...) asparagine" evidence="2">
    <location>
        <position position="213"/>
    </location>
</feature>
<feature type="glycosylation site" description="N-linked (GlcNAc...) asparagine" evidence="2">
    <location>
        <position position="238"/>
    </location>
</feature>
<feature type="disulfide bond" evidence="4">
    <location>
        <begin position="221"/>
        <end position="229"/>
    </location>
</feature>
<feature type="turn" evidence="11">
    <location>
        <begin position="35"/>
        <end position="37"/>
    </location>
</feature>
<evidence type="ECO:0000250" key="1">
    <source>
        <dbReference type="UniProtKB" id="P19260"/>
    </source>
</evidence>
<evidence type="ECO:0000255" key="2"/>
<evidence type="ECO:0000256" key="3">
    <source>
        <dbReference type="SAM" id="MobiDB-lite"/>
    </source>
</evidence>
<evidence type="ECO:0000269" key="4">
    <source>
    </source>
</evidence>
<evidence type="ECO:0000269" key="5">
    <source>
    </source>
</evidence>
<evidence type="ECO:0000269" key="6">
    <source>
    </source>
</evidence>
<evidence type="ECO:0000303" key="7">
    <source>
    </source>
</evidence>
<evidence type="ECO:0000303" key="8">
    <source>
    </source>
</evidence>
<evidence type="ECO:0000303" key="9">
    <source>
    </source>
</evidence>
<evidence type="ECO:0007744" key="10">
    <source>
        <dbReference type="PDB" id="4QXT"/>
    </source>
</evidence>
<evidence type="ECO:0007829" key="11">
    <source>
        <dbReference type="PDB" id="4QXT"/>
    </source>
</evidence>